<evidence type="ECO:0000250" key="1"/>
<evidence type="ECO:0000305" key="2"/>
<feature type="chain" id="PRO_0000062026" description="Large ribosomal subunit protein uL16">
    <location>
        <begin position="1"/>
        <end position="10" status="greater than"/>
    </location>
</feature>
<feature type="non-terminal residue">
    <location>
        <position position="10"/>
    </location>
</feature>
<keyword id="KW-0687">Ribonucleoprotein</keyword>
<keyword id="KW-0689">Ribosomal protein</keyword>
<keyword id="KW-0694">RNA-binding</keyword>
<keyword id="KW-0699">rRNA-binding</keyword>
<keyword id="KW-0820">tRNA-binding</keyword>
<protein>
    <recommendedName>
        <fullName evidence="2">Large ribosomal subunit protein uL16</fullName>
    </recommendedName>
    <alternativeName>
        <fullName>50S ribosomal protein L16</fullName>
    </alternativeName>
</protein>
<dbReference type="EMBL" id="M74771">
    <property type="protein sequence ID" value="AAA21914.1"/>
    <property type="molecule type" value="Genomic_DNA"/>
</dbReference>
<dbReference type="PIR" id="F41839">
    <property type="entry name" value="F41839"/>
</dbReference>
<dbReference type="GO" id="GO:1990904">
    <property type="term" value="C:ribonucleoprotein complex"/>
    <property type="evidence" value="ECO:0007669"/>
    <property type="project" value="UniProtKB-KW"/>
</dbReference>
<dbReference type="GO" id="GO:0005840">
    <property type="term" value="C:ribosome"/>
    <property type="evidence" value="ECO:0007669"/>
    <property type="project" value="UniProtKB-KW"/>
</dbReference>
<dbReference type="GO" id="GO:0019843">
    <property type="term" value="F:rRNA binding"/>
    <property type="evidence" value="ECO:0007669"/>
    <property type="project" value="UniProtKB-KW"/>
</dbReference>
<dbReference type="GO" id="GO:0000049">
    <property type="term" value="F:tRNA binding"/>
    <property type="evidence" value="ECO:0007669"/>
    <property type="project" value="UniProtKB-KW"/>
</dbReference>
<organism>
    <name type="scientific">Acholeplasma laidlawii</name>
    <dbReference type="NCBI Taxonomy" id="2148"/>
    <lineage>
        <taxon>Bacteria</taxon>
        <taxon>Bacillati</taxon>
        <taxon>Mycoplasmatota</taxon>
        <taxon>Mollicutes</taxon>
        <taxon>Acholeplasmatales</taxon>
        <taxon>Acholeplasmataceae</taxon>
        <taxon>Acholeplasma</taxon>
    </lineage>
</organism>
<comment type="function">
    <text evidence="1">Binds 23S rRNA and is also seen to make contacts with the A and possibly P site tRNAs.</text>
</comment>
<comment type="subunit">
    <text evidence="1">Part of the 50S ribosomal subunit.</text>
</comment>
<comment type="similarity">
    <text evidence="2">Belongs to the universal ribosomal protein uL16 family.</text>
</comment>
<gene>
    <name type="primary">rplP</name>
</gene>
<reference key="1">
    <citation type="journal article" date="1992" name="J. Bacteriol.">
        <title>Evolutionary relationships of a plant-pathogenic mycoplasmalike organism and Acholeplasma laidlawii deduced from two ribosomal protein gene sequences.</title>
        <authorList>
            <person name="Lim P.O."/>
            <person name="Sears B.B."/>
        </authorList>
    </citation>
    <scope>NUCLEOTIDE SEQUENCE [GENOMIC DNA]</scope>
</reference>
<accession>P29221</accession>
<name>RL16_ACHLA</name>
<sequence>MLMPKRTKYR</sequence>
<proteinExistence type="inferred from homology"/>